<name>PLSX_ECOLC</name>
<protein>
    <recommendedName>
        <fullName evidence="1">Phosphate acyltransferase</fullName>
        <ecNumber evidence="1">2.3.1.274</ecNumber>
    </recommendedName>
    <alternativeName>
        <fullName evidence="1">Acyl-ACP phosphotransacylase</fullName>
    </alternativeName>
    <alternativeName>
        <fullName evidence="1">Acyl-[acyl-carrier-protein]--phosphate acyltransferase</fullName>
    </alternativeName>
    <alternativeName>
        <fullName evidence="1">Phosphate-acyl-ACP acyltransferase</fullName>
    </alternativeName>
</protein>
<gene>
    <name evidence="1" type="primary">plsX</name>
    <name type="ordered locus">EcolC_2511</name>
</gene>
<sequence>MTRLTLALDVMGGDFGPSVTVPAALQALNSNSQLTLLLVGNPDAITPLLAKADFEQRSRLQIIPAQSVIASDARPSQAIRASRGSSMRVALELVKEGRAQACVSAGNTGALMGLAKLLLKPLEGIERPALVTVLPHQQKGKTVVLDLGANVDCDSTMLVQFAIMGSVLAEEVVEIPNPRVALLNIGEEEVKGLDSIRDASAVLKTIPSINYIGYLEANELLTGKTDVLVCDGFTGNVTLKTMEGVVRMFLSLLKSQGEGKKRSWWLLLLKRWLQKSLTRRFSHLNPDQYNGACLLGLRGTVIKSHGAANQRAFAVAIEQAVQAVQRQVPQRIAARLESVYPAGFELLDGGKSGTLR</sequence>
<proteinExistence type="inferred from homology"/>
<evidence type="ECO:0000255" key="1">
    <source>
        <dbReference type="HAMAP-Rule" id="MF_00019"/>
    </source>
</evidence>
<feature type="chain" id="PRO_1000074165" description="Phosphate acyltransferase">
    <location>
        <begin position="1"/>
        <end position="356"/>
    </location>
</feature>
<accession>B1IV13</accession>
<comment type="function">
    <text evidence="1">Catalyzes the reversible formation of acyl-phosphate (acyl-PO(4)) from acyl-[acyl-carrier-protein] (acyl-ACP). This enzyme utilizes acyl-ACP as fatty acyl donor, but not acyl-CoA.</text>
</comment>
<comment type="catalytic activity">
    <reaction evidence="1">
        <text>a fatty acyl-[ACP] + phosphate = an acyl phosphate + holo-[ACP]</text>
        <dbReference type="Rhea" id="RHEA:42292"/>
        <dbReference type="Rhea" id="RHEA-COMP:9685"/>
        <dbReference type="Rhea" id="RHEA-COMP:14125"/>
        <dbReference type="ChEBI" id="CHEBI:43474"/>
        <dbReference type="ChEBI" id="CHEBI:59918"/>
        <dbReference type="ChEBI" id="CHEBI:64479"/>
        <dbReference type="ChEBI" id="CHEBI:138651"/>
        <dbReference type="EC" id="2.3.1.274"/>
    </reaction>
</comment>
<comment type="pathway">
    <text evidence="1">Lipid metabolism; phospholipid metabolism.</text>
</comment>
<comment type="subunit">
    <text evidence="1">Homodimer. Probably interacts with PlsY.</text>
</comment>
<comment type="subcellular location">
    <subcellularLocation>
        <location evidence="1">Cytoplasm</location>
    </subcellularLocation>
    <text evidence="1">Associated with the membrane possibly through PlsY.</text>
</comment>
<comment type="similarity">
    <text evidence="1">Belongs to the PlsX family.</text>
</comment>
<organism>
    <name type="scientific">Escherichia coli (strain ATCC 8739 / DSM 1576 / NBRC 3972 / NCIMB 8545 / WDCM 00012 / Crooks)</name>
    <dbReference type="NCBI Taxonomy" id="481805"/>
    <lineage>
        <taxon>Bacteria</taxon>
        <taxon>Pseudomonadati</taxon>
        <taxon>Pseudomonadota</taxon>
        <taxon>Gammaproteobacteria</taxon>
        <taxon>Enterobacterales</taxon>
        <taxon>Enterobacteriaceae</taxon>
        <taxon>Escherichia</taxon>
    </lineage>
</organism>
<keyword id="KW-0963">Cytoplasm</keyword>
<keyword id="KW-0444">Lipid biosynthesis</keyword>
<keyword id="KW-0443">Lipid metabolism</keyword>
<keyword id="KW-0594">Phospholipid biosynthesis</keyword>
<keyword id="KW-1208">Phospholipid metabolism</keyword>
<keyword id="KW-0808">Transferase</keyword>
<dbReference type="EC" id="2.3.1.274" evidence="1"/>
<dbReference type="EMBL" id="CP000946">
    <property type="protein sequence ID" value="ACA78142.1"/>
    <property type="molecule type" value="Genomic_DNA"/>
</dbReference>
<dbReference type="RefSeq" id="WP_000197578.1">
    <property type="nucleotide sequence ID" value="NZ_MTFT01000032.1"/>
</dbReference>
<dbReference type="SMR" id="B1IV13"/>
<dbReference type="GeneID" id="93776318"/>
<dbReference type="KEGG" id="ecl:EcolC_2511"/>
<dbReference type="HOGENOM" id="CLU_039379_1_0_6"/>
<dbReference type="UniPathway" id="UPA00085"/>
<dbReference type="GO" id="GO:0005737">
    <property type="term" value="C:cytoplasm"/>
    <property type="evidence" value="ECO:0007669"/>
    <property type="project" value="UniProtKB-SubCell"/>
</dbReference>
<dbReference type="GO" id="GO:0043811">
    <property type="term" value="F:phosphate:acyl-[acyl carrier protein] acyltransferase activity"/>
    <property type="evidence" value="ECO:0007669"/>
    <property type="project" value="UniProtKB-UniRule"/>
</dbReference>
<dbReference type="GO" id="GO:0006633">
    <property type="term" value="P:fatty acid biosynthetic process"/>
    <property type="evidence" value="ECO:0007669"/>
    <property type="project" value="UniProtKB-UniRule"/>
</dbReference>
<dbReference type="GO" id="GO:0008654">
    <property type="term" value="P:phospholipid biosynthetic process"/>
    <property type="evidence" value="ECO:0007669"/>
    <property type="project" value="UniProtKB-KW"/>
</dbReference>
<dbReference type="FunFam" id="3.40.718.10:FF:000008">
    <property type="entry name" value="Phosphate acyltransferase"/>
    <property type="match status" value="1"/>
</dbReference>
<dbReference type="Gene3D" id="3.40.718.10">
    <property type="entry name" value="Isopropylmalate Dehydrogenase"/>
    <property type="match status" value="1"/>
</dbReference>
<dbReference type="HAMAP" id="MF_00019">
    <property type="entry name" value="PlsX"/>
    <property type="match status" value="1"/>
</dbReference>
<dbReference type="InterPro" id="IPR003664">
    <property type="entry name" value="FA_synthesis"/>
</dbReference>
<dbReference type="InterPro" id="IPR012281">
    <property type="entry name" value="Phospholipid_synth_PlsX-like"/>
</dbReference>
<dbReference type="NCBIfam" id="TIGR00182">
    <property type="entry name" value="plsX"/>
    <property type="match status" value="1"/>
</dbReference>
<dbReference type="PANTHER" id="PTHR30100">
    <property type="entry name" value="FATTY ACID/PHOSPHOLIPID SYNTHESIS PROTEIN PLSX"/>
    <property type="match status" value="1"/>
</dbReference>
<dbReference type="PANTHER" id="PTHR30100:SF1">
    <property type="entry name" value="PHOSPHATE ACYLTRANSFERASE"/>
    <property type="match status" value="1"/>
</dbReference>
<dbReference type="Pfam" id="PF02504">
    <property type="entry name" value="FA_synthesis"/>
    <property type="match status" value="1"/>
</dbReference>
<dbReference type="PIRSF" id="PIRSF002465">
    <property type="entry name" value="Phsphlp_syn_PlsX"/>
    <property type="match status" value="1"/>
</dbReference>
<dbReference type="SUPFAM" id="SSF53659">
    <property type="entry name" value="Isocitrate/Isopropylmalate dehydrogenase-like"/>
    <property type="match status" value="1"/>
</dbReference>
<reference key="1">
    <citation type="submission" date="2008-02" db="EMBL/GenBank/DDBJ databases">
        <title>Complete sequence of Escherichia coli C str. ATCC 8739.</title>
        <authorList>
            <person name="Copeland A."/>
            <person name="Lucas S."/>
            <person name="Lapidus A."/>
            <person name="Glavina del Rio T."/>
            <person name="Dalin E."/>
            <person name="Tice H."/>
            <person name="Bruce D."/>
            <person name="Goodwin L."/>
            <person name="Pitluck S."/>
            <person name="Kiss H."/>
            <person name="Brettin T."/>
            <person name="Detter J.C."/>
            <person name="Han C."/>
            <person name="Kuske C.R."/>
            <person name="Schmutz J."/>
            <person name="Larimer F."/>
            <person name="Land M."/>
            <person name="Hauser L."/>
            <person name="Kyrpides N."/>
            <person name="Mikhailova N."/>
            <person name="Ingram L."/>
            <person name="Richardson P."/>
        </authorList>
    </citation>
    <scope>NUCLEOTIDE SEQUENCE [LARGE SCALE GENOMIC DNA]</scope>
    <source>
        <strain>ATCC 8739 / DSM 1576 / NBRC 3972 / NCIMB 8545 / WDCM 00012 / Crooks</strain>
    </source>
</reference>